<comment type="function">
    <text evidence="2 3 4">Catalyzes the epimerization of various ketoses at the C(3) position. It is able to interconvert D-tagatose and D-ribulose to D-sorbose and D-xylulose, respectively. The enzyme is also able to accept other ketopentoses such as D-psicose with lower efficiency.</text>
</comment>
<comment type="catalytic activity">
    <reaction evidence="3 4">
        <text>keto-D-tagatose = keto-D-sorbose</text>
        <dbReference type="Rhea" id="RHEA:43048"/>
        <dbReference type="ChEBI" id="CHEBI:13022"/>
        <dbReference type="ChEBI" id="CHEBI:47693"/>
        <dbReference type="EC" id="5.1.3.31"/>
    </reaction>
</comment>
<comment type="catalytic activity">
    <reaction evidence="3 4">
        <text>D-allulose = keto-D-fructose</text>
        <dbReference type="Rhea" id="RHEA:42360"/>
        <dbReference type="ChEBI" id="CHEBI:27605"/>
        <dbReference type="ChEBI" id="CHEBI:48095"/>
        <dbReference type="EC" id="5.1.3.31"/>
    </reaction>
</comment>
<comment type="catalytic activity">
    <reaction evidence="4">
        <text>D-ribulose = D-xylulose</text>
        <dbReference type="Rhea" id="RHEA:51544"/>
        <dbReference type="ChEBI" id="CHEBI:17140"/>
        <dbReference type="ChEBI" id="CHEBI:17173"/>
        <dbReference type="EC" id="5.1.3.31"/>
    </reaction>
</comment>
<comment type="cofactor">
    <cofactor evidence="2 3 4">
        <name>Mn(2+)</name>
        <dbReference type="ChEBI" id="CHEBI:29035"/>
    </cofactor>
</comment>
<comment type="activity regulation">
    <text evidence="4">Strongly inhibited (about 90% of the enzyme activity) by Ag(+), Hg(2+) and p-chloromercuribenzoic acid. Cu(2+) and Zn(2+) inhibit about 60% of the enzyme activity.</text>
</comment>
<comment type="biophysicochemical properties">
    <kinetics>
        <KM evidence="4">55 mM for D-tagatose</KM>
        <Vmax evidence="4">30.0 umol/min/mg enzyme with D-tagatose as substrate</Vmax>
    </kinetics>
    <phDependence>
        <text evidence="4">Optimum pH is between 7 and 9 at 30 degrees Celsius. The enzyme is stable from 7 to 11 at 30 degrees Celsius.</text>
    </phDependence>
    <temperatureDependence>
        <text evidence="4">Optimum temperature is around 60 degrees Celsius. The enzyme is stable up to 60 degrees Celsius for 10 minutes.</text>
    </temperatureDependence>
</comment>
<comment type="subunit">
    <text evidence="2 3 4">Homodimer.</text>
</comment>
<comment type="similarity">
    <text evidence="6">Belongs to the hyi family.</text>
</comment>
<accession>O50580</accession>
<feature type="chain" id="PRO_0000209107" description="D-tagatose 3-epimerase">
    <location>
        <begin position="1"/>
        <end position="290"/>
    </location>
</feature>
<feature type="active site" description="Proton donor/acceptor" evidence="1">
    <location>
        <position position="152"/>
    </location>
</feature>
<feature type="active site" description="Proton donor/acceptor" evidence="1">
    <location>
        <position position="246"/>
    </location>
</feature>
<feature type="binding site" evidence="2">
    <location>
        <position position="66"/>
    </location>
    <ligand>
        <name>substrate</name>
    </ligand>
</feature>
<feature type="binding site" evidence="2 3">
    <location>
        <position position="152"/>
    </location>
    <ligand>
        <name>Mn(2+)</name>
        <dbReference type="ChEBI" id="CHEBI:29035"/>
    </ligand>
</feature>
<feature type="binding site" evidence="2 3">
    <location>
        <position position="158"/>
    </location>
    <ligand>
        <name>substrate</name>
    </ligand>
</feature>
<feature type="binding site" evidence="2 3">
    <location>
        <begin position="185"/>
        <end position="188"/>
    </location>
    <ligand>
        <name>substrate</name>
    </ligand>
</feature>
<feature type="binding site" evidence="2 3">
    <location>
        <position position="185"/>
    </location>
    <ligand>
        <name>Mn(2+)</name>
        <dbReference type="ChEBI" id="CHEBI:29035"/>
    </ligand>
</feature>
<feature type="binding site" evidence="2 3">
    <location>
        <position position="211"/>
    </location>
    <ligand>
        <name>Mn(2+)</name>
        <dbReference type="ChEBI" id="CHEBI:29035"/>
    </ligand>
</feature>
<feature type="binding site" evidence="2 3">
    <location>
        <position position="217"/>
    </location>
    <ligand>
        <name>substrate</name>
    </ligand>
</feature>
<feature type="binding site" evidence="2 3">
    <location>
        <position position="246"/>
    </location>
    <ligand>
        <name>Mn(2+)</name>
        <dbReference type="ChEBI" id="CHEBI:29035"/>
    </ligand>
</feature>
<feature type="mutagenesis site" description="Moderate increase in catalytic efficiency for D-fructose." evidence="3">
    <original>S</original>
    <variation>N</variation>
    <location>
        <position position="37"/>
    </location>
</feature>
<feature type="mutagenesis site" description="Shows a pronounced increase in catalytic efficiency for L-sorbose. It seems that this mutation switches the substrate preference from hexoses with a 4S,5R configuration to those with a 4R,5S configuration." evidence="3">
    <original>Q</original>
    <variation>H</variation>
    <location>
        <position position="183"/>
    </location>
</feature>
<feature type="strand" evidence="8">
    <location>
        <begin position="3"/>
        <end position="7"/>
    </location>
</feature>
<feature type="turn" evidence="7">
    <location>
        <begin position="8"/>
        <end position="11"/>
    </location>
</feature>
<feature type="strand" evidence="8">
    <location>
        <begin position="13"/>
        <end position="15"/>
    </location>
</feature>
<feature type="helix" evidence="8">
    <location>
        <begin position="19"/>
        <end position="28"/>
    </location>
</feature>
<feature type="strand" evidence="8">
    <location>
        <begin position="32"/>
        <end position="38"/>
    </location>
</feature>
<feature type="helix" evidence="8">
    <location>
        <begin position="41"/>
        <end position="43"/>
    </location>
</feature>
<feature type="helix" evidence="8">
    <location>
        <begin position="46"/>
        <end position="59"/>
    </location>
</feature>
<feature type="strand" evidence="8">
    <location>
        <begin position="62"/>
        <end position="69"/>
    </location>
</feature>
<feature type="helix" evidence="8">
    <location>
        <begin position="71"/>
        <end position="73"/>
    </location>
</feature>
<feature type="helix" evidence="8">
    <location>
        <begin position="80"/>
        <end position="100"/>
    </location>
</feature>
<feature type="strand" evidence="8">
    <location>
        <begin position="103"/>
        <end position="114"/>
    </location>
</feature>
<feature type="helix" evidence="8">
    <location>
        <begin position="125"/>
        <end position="136"/>
    </location>
</feature>
<feature type="helix" evidence="8">
    <location>
        <begin position="139"/>
        <end position="145"/>
    </location>
</feature>
<feature type="strand" evidence="8">
    <location>
        <begin position="148"/>
        <end position="152"/>
    </location>
</feature>
<feature type="turn" evidence="8">
    <location>
        <begin position="156"/>
        <end position="158"/>
    </location>
</feature>
<feature type="helix" evidence="8">
    <location>
        <begin position="165"/>
        <end position="175"/>
    </location>
</feature>
<feature type="strand" evidence="8">
    <location>
        <begin position="180"/>
        <end position="185"/>
    </location>
</feature>
<feature type="helix" evidence="8">
    <location>
        <begin position="186"/>
        <end position="192"/>
    </location>
</feature>
<feature type="helix" evidence="8">
    <location>
        <begin position="196"/>
        <end position="202"/>
    </location>
</feature>
<feature type="turn" evidence="8">
    <location>
        <begin position="203"/>
        <end position="206"/>
    </location>
</feature>
<feature type="strand" evidence="8">
    <location>
        <begin position="207"/>
        <end position="212"/>
    </location>
</feature>
<feature type="helix" evidence="8">
    <location>
        <begin position="227"/>
        <end position="236"/>
    </location>
</feature>
<feature type="strand" evidence="8">
    <location>
        <begin position="241"/>
        <end position="245"/>
    </location>
</feature>
<feature type="helix" evidence="8">
    <location>
        <begin position="254"/>
        <end position="259"/>
    </location>
</feature>
<feature type="turn" evidence="7">
    <location>
        <begin position="265"/>
        <end position="268"/>
    </location>
</feature>
<feature type="helix" evidence="8">
    <location>
        <begin position="271"/>
        <end position="290"/>
    </location>
</feature>
<proteinExistence type="evidence at protein level"/>
<protein>
    <recommendedName>
        <fullName evidence="5">D-tagatose 3-epimerase</fullName>
        <shortName evidence="5">DTE</shortName>
        <ecNumber evidence="3 4">5.1.3.31</ecNumber>
    </recommendedName>
    <alternativeName>
        <fullName evidence="5">D-ribulose 3-epimerase</fullName>
    </alternativeName>
    <alternativeName>
        <fullName evidence="5">Ketose 3-epimerase</fullName>
    </alternativeName>
</protein>
<name>DT3E_PSECI</name>
<evidence type="ECO:0000250" key="1">
    <source>
        <dbReference type="UniProtKB" id="Q9WYP7"/>
    </source>
</evidence>
<evidence type="ECO:0000269" key="2">
    <source>
    </source>
</evidence>
<evidence type="ECO:0000269" key="3">
    <source>
    </source>
</evidence>
<evidence type="ECO:0000269" key="4">
    <source ref="2"/>
</evidence>
<evidence type="ECO:0000303" key="5">
    <source ref="2"/>
</evidence>
<evidence type="ECO:0000305" key="6"/>
<evidence type="ECO:0007829" key="7">
    <source>
        <dbReference type="PDB" id="4PGL"/>
    </source>
</evidence>
<evidence type="ECO:0007829" key="8">
    <source>
        <dbReference type="PDB" id="4XSL"/>
    </source>
</evidence>
<organism>
    <name type="scientific">Pseudomonas cichorii</name>
    <dbReference type="NCBI Taxonomy" id="36746"/>
    <lineage>
        <taxon>Bacteria</taxon>
        <taxon>Pseudomonadati</taxon>
        <taxon>Pseudomonadota</taxon>
        <taxon>Gammaproteobacteria</taxon>
        <taxon>Pseudomonadales</taxon>
        <taxon>Pseudomonadaceae</taxon>
        <taxon>Pseudomonas</taxon>
    </lineage>
</organism>
<dbReference type="EC" id="5.1.3.31" evidence="3 4"/>
<dbReference type="EMBL" id="AB000361">
    <property type="protein sequence ID" value="BAA24429.1"/>
    <property type="molecule type" value="Genomic_DNA"/>
</dbReference>
<dbReference type="PDB" id="2OU4">
    <property type="method" value="X-ray"/>
    <property type="resolution" value="2.50 A"/>
    <property type="chains" value="A/B/C/D=1-290"/>
</dbReference>
<dbReference type="PDB" id="2QUL">
    <property type="method" value="X-ray"/>
    <property type="resolution" value="1.79 A"/>
    <property type="chains" value="A/B/C/D=1-290"/>
</dbReference>
<dbReference type="PDB" id="2QUM">
    <property type="method" value="X-ray"/>
    <property type="resolution" value="2.28 A"/>
    <property type="chains" value="A/B/C/D=1-290"/>
</dbReference>
<dbReference type="PDB" id="2QUN">
    <property type="method" value="X-ray"/>
    <property type="resolution" value="2.06 A"/>
    <property type="chains" value="A/B/C/D=1-290"/>
</dbReference>
<dbReference type="PDB" id="4PFH">
    <property type="method" value="X-ray"/>
    <property type="resolution" value="1.90 A"/>
    <property type="chains" value="A/B=1-290"/>
</dbReference>
<dbReference type="PDB" id="4PGL">
    <property type="method" value="X-ray"/>
    <property type="resolution" value="2.10 A"/>
    <property type="chains" value="A/B/C/D=1-290"/>
</dbReference>
<dbReference type="PDB" id="4XSL">
    <property type="method" value="X-ray"/>
    <property type="resolution" value="1.60 A"/>
    <property type="chains" value="A/B/C/D=1-290"/>
</dbReference>
<dbReference type="PDB" id="4XSM">
    <property type="method" value="X-ray"/>
    <property type="resolution" value="2.30 A"/>
    <property type="chains" value="A/B/C/D=1-290"/>
</dbReference>
<dbReference type="PDB" id="4YTQ">
    <property type="method" value="X-ray"/>
    <property type="resolution" value="1.90 A"/>
    <property type="chains" value="A/B/C/D=1-290"/>
</dbReference>
<dbReference type="PDB" id="4YTR">
    <property type="method" value="X-ray"/>
    <property type="resolution" value="1.90 A"/>
    <property type="chains" value="A/B/C/D=1-290"/>
</dbReference>
<dbReference type="PDB" id="4YTS">
    <property type="method" value="X-ray"/>
    <property type="resolution" value="2.14 A"/>
    <property type="chains" value="A/B/C/D=1-290"/>
</dbReference>
<dbReference type="PDB" id="4YTT">
    <property type="method" value="X-ray"/>
    <property type="resolution" value="1.80 A"/>
    <property type="chains" value="A/B/C/D=1-290"/>
</dbReference>
<dbReference type="PDB" id="4YTU">
    <property type="method" value="X-ray"/>
    <property type="resolution" value="2.20 A"/>
    <property type="chains" value="A/B/C/D=1-290"/>
</dbReference>
<dbReference type="PDB" id="5J8L">
    <property type="method" value="X-ray"/>
    <property type="resolution" value="1.73 A"/>
    <property type="chains" value="A/B/C/D=1-290"/>
</dbReference>
<dbReference type="PDBsum" id="2OU4"/>
<dbReference type="PDBsum" id="2QUL"/>
<dbReference type="PDBsum" id="2QUM"/>
<dbReference type="PDBsum" id="2QUN"/>
<dbReference type="PDBsum" id="4PFH"/>
<dbReference type="PDBsum" id="4PGL"/>
<dbReference type="PDBsum" id="4XSL"/>
<dbReference type="PDBsum" id="4XSM"/>
<dbReference type="PDBsum" id="4YTQ"/>
<dbReference type="PDBsum" id="4YTR"/>
<dbReference type="PDBsum" id="4YTS"/>
<dbReference type="PDBsum" id="4YTT"/>
<dbReference type="PDBsum" id="4YTU"/>
<dbReference type="PDBsum" id="5J8L"/>
<dbReference type="SMR" id="O50580"/>
<dbReference type="BioCyc" id="MetaCyc:MONOMER-17957"/>
<dbReference type="BRENDA" id="5.1.3.31">
    <property type="organism ID" value="5107"/>
</dbReference>
<dbReference type="EvolutionaryTrace" id="O50580"/>
<dbReference type="GO" id="GO:0016853">
    <property type="term" value="F:isomerase activity"/>
    <property type="evidence" value="ECO:0007669"/>
    <property type="project" value="UniProtKB-KW"/>
</dbReference>
<dbReference type="GO" id="GO:0046872">
    <property type="term" value="F:metal ion binding"/>
    <property type="evidence" value="ECO:0007669"/>
    <property type="project" value="UniProtKB-KW"/>
</dbReference>
<dbReference type="Gene3D" id="3.20.20.150">
    <property type="entry name" value="Divalent-metal-dependent TIM barrel enzymes"/>
    <property type="match status" value="1"/>
</dbReference>
<dbReference type="InterPro" id="IPR050312">
    <property type="entry name" value="IolE/XylAMocC-like"/>
</dbReference>
<dbReference type="InterPro" id="IPR036237">
    <property type="entry name" value="Xyl_isomerase-like_sf"/>
</dbReference>
<dbReference type="InterPro" id="IPR013022">
    <property type="entry name" value="Xyl_isomerase-like_TIM-brl"/>
</dbReference>
<dbReference type="PANTHER" id="PTHR12110">
    <property type="entry name" value="HYDROXYPYRUVATE ISOMERASE"/>
    <property type="match status" value="1"/>
</dbReference>
<dbReference type="PANTHER" id="PTHR12110:SF41">
    <property type="entry name" value="INOSOSE DEHYDRATASE"/>
    <property type="match status" value="1"/>
</dbReference>
<dbReference type="Pfam" id="PF01261">
    <property type="entry name" value="AP_endonuc_2"/>
    <property type="match status" value="1"/>
</dbReference>
<dbReference type="SUPFAM" id="SSF51658">
    <property type="entry name" value="Xylose isomerase-like"/>
    <property type="match status" value="1"/>
</dbReference>
<sequence>MNKVGMFYTYWSTEWMVDFPATAKRIAGLGFDLMEISLGEFHNLSDAKKRELKAVADDLGLTVMCCIGLKSEYDFASPDKSVRDAGTEYVKRLLDDCHLLGAPVFAGLTFCAWPQSPPLDMKDKRPYVDRAIESVRRVIKVAEDYGIIYALEVVNRFEQWLCNDAKEAIAFADAVDSPACKVQLDTFHMNIEETSFRDAILACKGKMGHFHLGEANRLPPGEGRLPWDEIFGALKEIGYDGTIVMEPFMRKGGSVSRAVGVWRDMSNGATDEEMDERARRSLQFVRDKLA</sequence>
<reference key="1">
    <citation type="journal article" date="1997" name="J. Ferment. Bioeng.">
        <title>Cloning and characterization of D-tagatose 3-epimerase gene from Pseudomonas cichorii ST-24.</title>
        <authorList>
            <person name="Ishida Y."/>
            <person name="Kamiya T."/>
            <person name="Itoh H."/>
            <person name="Kimura Y."/>
            <person name="Izumori K."/>
        </authorList>
    </citation>
    <scope>NUCLEOTIDE SEQUENCE [GENOMIC DNA]</scope>
    <source>
        <strain>ST-24</strain>
    </source>
</reference>
<reference key="2">
    <citation type="journal article" date="1994" name="Biosci. Biotechnol. Biochem.">
        <title>Purification and characterization of D-tagatose 3-epimerase from Pseudomonas sp. ST-244.</title>
        <authorList>
            <person name="Itoh H."/>
            <person name="Okaya H."/>
            <person name="Khan A.R."/>
            <person name="Tajima S."/>
            <person name="Hayakawa S."/>
            <person name="Izumori K."/>
        </authorList>
    </citation>
    <scope>PROTEIN SEQUENCE OF 1-30</scope>
    <scope>FUNCTION</scope>
    <scope>CATALYTIC ACTIVITY</scope>
    <scope>BIOPHYSICOCHEMICAL PROPERTIES</scope>
    <scope>ACTIVITY REGULATION</scope>
    <scope>COFACTOR</scope>
    <scope>SUBSTRATE SPECIFICITY</scope>
    <scope>SUBUNIT</scope>
    <source>
        <strain>ST-24</strain>
    </source>
</reference>
<reference key="3">
    <citation type="journal article" date="2007" name="J. Mol. Biol.">
        <title>Crystal structures of D-tagatose 3-epimerase from Pseudomonas cichorii and its complexes with D-tagatose and D-fructose.</title>
        <authorList>
            <person name="Yoshida H."/>
            <person name="Yamada M."/>
            <person name="Nishitani T."/>
            <person name="Takada G."/>
            <person name="Izumori K."/>
            <person name="Kamitori S."/>
        </authorList>
    </citation>
    <scope>X-RAY CRYSTALLOGRAPHY (1.79 ANGSTROMS) IN COMPLEX WITH MANGANESE ION AND SUBSTRATE ANALOGS</scope>
    <scope>FUNCTION</scope>
    <scope>COFACTOR</scope>
    <scope>REACTION MECHANISM</scope>
    <scope>SUBUNIT</scope>
</reference>
<reference key="4">
    <citation type="journal article" date="2015" name="ChemBioChem">
        <title>Directed divergent evolution of a thermostable D-tagatose epimerase towards improved activity for two hexose substrates.</title>
        <authorList>
            <person name="Bosshart A."/>
            <person name="Hee C.S."/>
            <person name="Bechtold M."/>
            <person name="Schirmer T."/>
            <person name="Panke S."/>
        </authorList>
    </citation>
    <scope>X-RAY CRYSTALLOGRAPHY (1.90 ANGSTROMS) OF MUTANTS IDF8 AND ILS6 IN COMPLEX WITH MANGANESE ION AND SUBSTRATES</scope>
    <scope>FUNCTION</scope>
    <scope>CATALYTIC ACTIVITY</scope>
    <scope>MUTAGENESIS OF SER-37 AND GLN-183</scope>
    <scope>SUBSTRATE SPECIFICITY</scope>
    <scope>COFACTOR</scope>
    <scope>SUBUNIT</scope>
</reference>
<keyword id="KW-0002">3D-structure</keyword>
<keyword id="KW-0903">Direct protein sequencing</keyword>
<keyword id="KW-0413">Isomerase</keyword>
<keyword id="KW-0464">Manganese</keyword>
<keyword id="KW-0479">Metal-binding</keyword>